<sequence length="479" mass="52686">MKKLSSISTALGSFLLSVSFSLPTFANINVSDLTQKLPEGSNVGFIAKNINQNQIIADYNGSTFMLSASTQKVFTAVAAKLALDDQFQFETALLSNGKIQNGNLDGNLIVRFTGDPDLTRGQLYSLLAELKKQGIKKINGDLVLDTSVFSSHDRGLGWIWNDLTMCFNSPPAAANIDNNCFYAELDANKNPGEIVKINVPAQFPIQVFGQVYVADSNEAPYCQLDVVVHDNNRYQVKGCLARQYKPFGLSFAVQNTDAYAAEIIQRQLRQLGIEFNGKVLLPQKPQQGQLLAKHLSKPLPDLLKKMMKKSDNQIADSLFRAVAFNYYKRPASFQLGTLAVKSILQKQGIRFGNSILADGSGLSRHNLVAPKTMLSVLEYIAKNEDKLHLMETFPIAGVDGTISGRGGLISPPLVKNVIAKTGSLKGVYNLAGFMTNARGEKVAFVQFINGYSTGDLESKTKRAPLVQFERNLYNELYKY</sequence>
<reference key="1">
    <citation type="journal article" date="1995" name="Science">
        <title>Whole-genome random sequencing and assembly of Haemophilus influenzae Rd.</title>
        <authorList>
            <person name="Fleischmann R.D."/>
            <person name="Adams M.D."/>
            <person name="White O."/>
            <person name="Clayton R.A."/>
            <person name="Kirkness E.F."/>
            <person name="Kerlavage A.R."/>
            <person name="Bult C.J."/>
            <person name="Tomb J.-F."/>
            <person name="Dougherty B.A."/>
            <person name="Merrick J.M."/>
            <person name="McKenney K."/>
            <person name="Sutton G.G."/>
            <person name="FitzHugh W."/>
            <person name="Fields C.A."/>
            <person name="Gocayne J.D."/>
            <person name="Scott J.D."/>
            <person name="Shirley R."/>
            <person name="Liu L.-I."/>
            <person name="Glodek A."/>
            <person name="Kelley J.M."/>
            <person name="Weidman J.F."/>
            <person name="Phillips C.A."/>
            <person name="Spriggs T."/>
            <person name="Hedblom E."/>
            <person name="Cotton M.D."/>
            <person name="Utterback T.R."/>
            <person name="Hanna M.C."/>
            <person name="Nguyen D.T."/>
            <person name="Saudek D.M."/>
            <person name="Brandon R.C."/>
            <person name="Fine L.D."/>
            <person name="Fritchman J.L."/>
            <person name="Fuhrmann J.L."/>
            <person name="Geoghagen N.S.M."/>
            <person name="Gnehm C.L."/>
            <person name="McDonald L.A."/>
            <person name="Small K.V."/>
            <person name="Fraser C.M."/>
            <person name="Smith H.O."/>
            <person name="Venter J.C."/>
        </authorList>
    </citation>
    <scope>NUCLEOTIDE SEQUENCE [LARGE SCALE GENOMIC DNA]</scope>
    <source>
        <strain>ATCC 51907 / DSM 11121 / KW20 / Rd</strain>
    </source>
</reference>
<proteinExistence type="evidence at protein level"/>
<protein>
    <recommendedName>
        <fullName>D-alanyl-D-alanine carboxypeptidase DacB</fullName>
        <shortName>DD-carboxypeptidase</shortName>
        <shortName>DD-peptidase</shortName>
        <ecNumber>3.4.16.4</ecNumber>
    </recommendedName>
    <alternativeName>
        <fullName>D-alanyl-D-alanine endopeptidase</fullName>
        <shortName>DD-endopeptidase</shortName>
        <ecNumber>3.4.21.-</ecNumber>
    </alternativeName>
    <alternativeName>
        <fullName>Penicillin-binding protein 4</fullName>
        <shortName>PBP-4</shortName>
    </alternativeName>
</protein>
<feature type="signal peptide" evidence="3">
    <location>
        <begin position="1"/>
        <end position="26"/>
    </location>
</feature>
<feature type="chain" id="PRO_0000027242" description="D-alanyl-D-alanine carboxypeptidase DacB">
    <location>
        <begin position="27"/>
        <end position="479"/>
    </location>
</feature>
<feature type="active site" description="Acyl-ester intermediate" evidence="2">
    <location>
        <position position="69"/>
    </location>
</feature>
<feature type="active site" description="Proton acceptor" evidence="2">
    <location>
        <position position="72"/>
    </location>
</feature>
<feature type="active site" evidence="2">
    <location>
        <position position="310"/>
    </location>
</feature>
<feature type="binding site" evidence="1">
    <location>
        <position position="420"/>
    </location>
    <ligand>
        <name>substrate</name>
    </ligand>
</feature>
<feature type="helix" evidence="5">
    <location>
        <begin position="30"/>
        <end position="34"/>
    </location>
</feature>
<feature type="strand" evidence="5">
    <location>
        <begin position="42"/>
        <end position="49"/>
    </location>
</feature>
<feature type="turn" evidence="5">
    <location>
        <begin position="50"/>
        <end position="53"/>
    </location>
</feature>
<feature type="strand" evidence="5">
    <location>
        <begin position="54"/>
        <end position="60"/>
    </location>
</feature>
<feature type="helix" evidence="5">
    <location>
        <begin position="68"/>
        <end position="71"/>
    </location>
</feature>
<feature type="helix" evidence="5">
    <location>
        <begin position="72"/>
        <end position="82"/>
    </location>
</feature>
<feature type="strand" evidence="5">
    <location>
        <begin position="90"/>
        <end position="97"/>
    </location>
</feature>
<feature type="strand" evidence="5">
    <location>
        <begin position="108"/>
        <end position="111"/>
    </location>
</feature>
<feature type="helix" evidence="5">
    <location>
        <begin position="120"/>
        <end position="132"/>
    </location>
</feature>
<feature type="strand" evidence="5">
    <location>
        <begin position="142"/>
        <end position="145"/>
    </location>
</feature>
<feature type="helix" evidence="5">
    <location>
        <begin position="160"/>
        <end position="162"/>
    </location>
</feature>
<feature type="helix" evidence="5">
    <location>
        <begin position="166"/>
        <end position="168"/>
    </location>
</feature>
<feature type="helix" evidence="5">
    <location>
        <begin position="177"/>
        <end position="179"/>
    </location>
</feature>
<feature type="strand" evidence="5">
    <location>
        <begin position="180"/>
        <end position="186"/>
    </location>
</feature>
<feature type="strand" evidence="5">
    <location>
        <begin position="196"/>
        <end position="198"/>
    </location>
</feature>
<feature type="strand" evidence="5">
    <location>
        <begin position="206"/>
        <end position="208"/>
    </location>
</feature>
<feature type="strand" evidence="5">
    <location>
        <begin position="212"/>
        <end position="214"/>
    </location>
</feature>
<feature type="turn" evidence="5">
    <location>
        <begin position="216"/>
        <end position="218"/>
    </location>
</feature>
<feature type="helix" evidence="5">
    <location>
        <begin position="219"/>
        <end position="221"/>
    </location>
</feature>
<feature type="strand" evidence="5">
    <location>
        <begin position="224"/>
        <end position="229"/>
    </location>
</feature>
<feature type="turn" evidence="5">
    <location>
        <begin position="230"/>
        <end position="232"/>
    </location>
</feature>
<feature type="strand" evidence="5">
    <location>
        <begin position="233"/>
        <end position="241"/>
    </location>
</feature>
<feature type="strand" evidence="5">
    <location>
        <begin position="247"/>
        <end position="252"/>
    </location>
</feature>
<feature type="helix" evidence="5">
    <location>
        <begin position="256"/>
        <end position="270"/>
    </location>
</feature>
<feature type="strand" evidence="5">
    <location>
        <begin position="289"/>
        <end position="295"/>
    </location>
</feature>
<feature type="helix" evidence="5">
    <location>
        <begin position="299"/>
        <end position="309"/>
    </location>
</feature>
<feature type="helix" evidence="5">
    <location>
        <begin position="312"/>
        <end position="327"/>
    </location>
</feature>
<feature type="helix" evidence="5">
    <location>
        <begin position="333"/>
        <end position="346"/>
    </location>
</feature>
<feature type="strand" evidence="5">
    <location>
        <begin position="359"/>
        <end position="361"/>
    </location>
</feature>
<feature type="helix" evidence="5">
    <location>
        <begin position="370"/>
        <end position="382"/>
    </location>
</feature>
<feature type="helix" evidence="5">
    <location>
        <begin position="384"/>
        <end position="387"/>
    </location>
</feature>
<feature type="helix" evidence="5">
    <location>
        <begin position="390"/>
        <end position="392"/>
    </location>
</feature>
<feature type="turn" evidence="5">
    <location>
        <begin position="396"/>
        <end position="398"/>
    </location>
</feature>
<feature type="helix" evidence="5">
    <location>
        <begin position="400"/>
        <end position="402"/>
    </location>
</feature>
<feature type="helix" evidence="5">
    <location>
        <begin position="406"/>
        <end position="408"/>
    </location>
</feature>
<feature type="turn" evidence="5">
    <location>
        <begin position="411"/>
        <end position="416"/>
    </location>
</feature>
<feature type="strand" evidence="5">
    <location>
        <begin position="418"/>
        <end position="424"/>
    </location>
</feature>
<feature type="strand" evidence="5">
    <location>
        <begin position="427"/>
        <end position="435"/>
    </location>
</feature>
<feature type="strand" evidence="5">
    <location>
        <begin position="441"/>
        <end position="450"/>
    </location>
</feature>
<feature type="helix" evidence="5">
    <location>
        <begin position="463"/>
        <end position="478"/>
    </location>
</feature>
<organism>
    <name type="scientific">Haemophilus influenzae (strain ATCC 51907 / DSM 11121 / KW20 / Rd)</name>
    <dbReference type="NCBI Taxonomy" id="71421"/>
    <lineage>
        <taxon>Bacteria</taxon>
        <taxon>Pseudomonadati</taxon>
        <taxon>Pseudomonadota</taxon>
        <taxon>Gammaproteobacteria</taxon>
        <taxon>Pasteurellales</taxon>
        <taxon>Pasteurellaceae</taxon>
        <taxon>Haemophilus</taxon>
    </lineage>
</organism>
<gene>
    <name type="primary">dacB</name>
    <name type="ordered locus">HI_1330</name>
</gene>
<dbReference type="EC" id="3.4.16.4"/>
<dbReference type="EC" id="3.4.21.-"/>
<dbReference type="EMBL" id="L42023">
    <property type="protein sequence ID" value="AAC22975.1"/>
    <property type="molecule type" value="Genomic_DNA"/>
</dbReference>
<dbReference type="PIR" id="A64117">
    <property type="entry name" value="A64117"/>
</dbReference>
<dbReference type="RefSeq" id="NP_439482.1">
    <property type="nucleotide sequence ID" value="NC_000907.1"/>
</dbReference>
<dbReference type="PDB" id="3A3D">
    <property type="method" value="X-ray"/>
    <property type="resolution" value="1.60 A"/>
    <property type="chains" value="A/B=28-479"/>
</dbReference>
<dbReference type="PDB" id="3A3E">
    <property type="method" value="X-ray"/>
    <property type="resolution" value="2.40 A"/>
    <property type="chains" value="A/B=28-479"/>
</dbReference>
<dbReference type="PDB" id="3A3F">
    <property type="method" value="X-ray"/>
    <property type="resolution" value="2.10 A"/>
    <property type="chains" value="A/B=28-479"/>
</dbReference>
<dbReference type="PDB" id="3A3I">
    <property type="method" value="X-ray"/>
    <property type="resolution" value="2.00 A"/>
    <property type="chains" value="A/B=28-479"/>
</dbReference>
<dbReference type="PDBsum" id="3A3D"/>
<dbReference type="PDBsum" id="3A3E"/>
<dbReference type="PDBsum" id="3A3F"/>
<dbReference type="PDBsum" id="3A3I"/>
<dbReference type="SMR" id="P45161"/>
<dbReference type="STRING" id="71421.HI_1330"/>
<dbReference type="MEROPS" id="S13.001"/>
<dbReference type="EnsemblBacteria" id="AAC22975">
    <property type="protein sequence ID" value="AAC22975"/>
    <property type="gene ID" value="HI_1330"/>
</dbReference>
<dbReference type="KEGG" id="hin:HI_1330"/>
<dbReference type="PATRIC" id="fig|71421.8.peg.1383"/>
<dbReference type="eggNOG" id="COG2027">
    <property type="taxonomic scope" value="Bacteria"/>
</dbReference>
<dbReference type="HOGENOM" id="CLU_017692_1_1_6"/>
<dbReference type="OrthoDB" id="9802627at2"/>
<dbReference type="PhylomeDB" id="P45161"/>
<dbReference type="BioCyc" id="HINF71421:G1GJ1-1355-MONOMER"/>
<dbReference type="UniPathway" id="UPA00219"/>
<dbReference type="EvolutionaryTrace" id="P45161"/>
<dbReference type="Proteomes" id="UP000000579">
    <property type="component" value="Chromosome"/>
</dbReference>
<dbReference type="GO" id="GO:0042597">
    <property type="term" value="C:periplasmic space"/>
    <property type="evidence" value="ECO:0007669"/>
    <property type="project" value="UniProtKB-SubCell"/>
</dbReference>
<dbReference type="GO" id="GO:0004185">
    <property type="term" value="F:serine-type carboxypeptidase activity"/>
    <property type="evidence" value="ECO:0000318"/>
    <property type="project" value="GO_Central"/>
</dbReference>
<dbReference type="GO" id="GO:0009002">
    <property type="term" value="F:serine-type D-Ala-D-Ala carboxypeptidase activity"/>
    <property type="evidence" value="ECO:0007669"/>
    <property type="project" value="UniProtKB-EC"/>
</dbReference>
<dbReference type="GO" id="GO:0051301">
    <property type="term" value="P:cell division"/>
    <property type="evidence" value="ECO:0007669"/>
    <property type="project" value="UniProtKB-KW"/>
</dbReference>
<dbReference type="GO" id="GO:0071555">
    <property type="term" value="P:cell wall organization"/>
    <property type="evidence" value="ECO:0007669"/>
    <property type="project" value="UniProtKB-KW"/>
</dbReference>
<dbReference type="GO" id="GO:0009252">
    <property type="term" value="P:peptidoglycan biosynthetic process"/>
    <property type="evidence" value="ECO:0007669"/>
    <property type="project" value="UniProtKB-UniPathway"/>
</dbReference>
<dbReference type="GO" id="GO:0000270">
    <property type="term" value="P:peptidoglycan metabolic process"/>
    <property type="evidence" value="ECO:0000318"/>
    <property type="project" value="GO_Central"/>
</dbReference>
<dbReference type="GO" id="GO:0006508">
    <property type="term" value="P:proteolysis"/>
    <property type="evidence" value="ECO:0007669"/>
    <property type="project" value="InterPro"/>
</dbReference>
<dbReference type="GO" id="GO:0008360">
    <property type="term" value="P:regulation of cell shape"/>
    <property type="evidence" value="ECO:0007669"/>
    <property type="project" value="UniProtKB-KW"/>
</dbReference>
<dbReference type="GO" id="GO:0046677">
    <property type="term" value="P:response to antibiotic"/>
    <property type="evidence" value="ECO:0007669"/>
    <property type="project" value="UniProtKB-KW"/>
</dbReference>
<dbReference type="Gene3D" id="3.50.80.20">
    <property type="entry name" value="D-Ala-D-Ala carboxypeptidase C, peptidase S13"/>
    <property type="match status" value="1"/>
</dbReference>
<dbReference type="Gene3D" id="3.40.710.10">
    <property type="entry name" value="DD-peptidase/beta-lactamase superfamily"/>
    <property type="match status" value="1"/>
</dbReference>
<dbReference type="InterPro" id="IPR012338">
    <property type="entry name" value="Beta-lactam/transpept-like"/>
</dbReference>
<dbReference type="InterPro" id="IPR000667">
    <property type="entry name" value="Peptidase_S13"/>
</dbReference>
<dbReference type="NCBIfam" id="TIGR00666">
    <property type="entry name" value="PBP4"/>
    <property type="match status" value="1"/>
</dbReference>
<dbReference type="NCBIfam" id="NF008322">
    <property type="entry name" value="PRK11113.1"/>
    <property type="match status" value="1"/>
</dbReference>
<dbReference type="PANTHER" id="PTHR30023">
    <property type="entry name" value="D-ALANYL-D-ALANINE CARBOXYPEPTIDASE"/>
    <property type="match status" value="1"/>
</dbReference>
<dbReference type="PANTHER" id="PTHR30023:SF0">
    <property type="entry name" value="PENICILLIN-SENSITIVE CARBOXYPEPTIDASE A"/>
    <property type="match status" value="1"/>
</dbReference>
<dbReference type="Pfam" id="PF02113">
    <property type="entry name" value="Peptidase_S13"/>
    <property type="match status" value="1"/>
</dbReference>
<dbReference type="PRINTS" id="PR00922">
    <property type="entry name" value="DADACBPTASE3"/>
</dbReference>
<dbReference type="SUPFAM" id="SSF56601">
    <property type="entry name" value="beta-lactamase/transpeptidase-like"/>
    <property type="match status" value="1"/>
</dbReference>
<accession>P45161</accession>
<comment type="function">
    <text evidence="1">Not involved in transpeptidation but exclusively catalyzes a DD-carboxypeptidase and DD-endopeptidase reaction.</text>
</comment>
<comment type="catalytic activity">
    <reaction>
        <text>Preferential cleavage: (Ac)2-L-Lys-D-Ala-|-D-Ala. Also transpeptidation of peptidyl-alanyl moieties that are N-acyl substituents of D-alanine.</text>
        <dbReference type="EC" id="3.4.16.4"/>
    </reaction>
</comment>
<comment type="pathway">
    <text>Cell wall biogenesis; peptidoglycan biosynthesis.</text>
</comment>
<comment type="subcellular location">
    <subcellularLocation>
        <location evidence="4">Periplasm</location>
    </subcellularLocation>
</comment>
<comment type="similarity">
    <text evidence="4">Belongs to the peptidase S13 family.</text>
</comment>
<name>DACB_HAEIN</name>
<keyword id="KW-0002">3D-structure</keyword>
<keyword id="KW-0046">Antibiotic resistance</keyword>
<keyword id="KW-0131">Cell cycle</keyword>
<keyword id="KW-0132">Cell division</keyword>
<keyword id="KW-0133">Cell shape</keyword>
<keyword id="KW-0961">Cell wall biogenesis/degradation</keyword>
<keyword id="KW-0378">Hydrolase</keyword>
<keyword id="KW-0573">Peptidoglycan synthesis</keyword>
<keyword id="KW-0574">Periplasm</keyword>
<keyword id="KW-1185">Reference proteome</keyword>
<keyword id="KW-0732">Signal</keyword>
<evidence type="ECO:0000250" key="1"/>
<evidence type="ECO:0000250" key="2">
    <source>
        <dbReference type="UniProtKB" id="P39844"/>
    </source>
</evidence>
<evidence type="ECO:0000255" key="3"/>
<evidence type="ECO:0000305" key="4"/>
<evidence type="ECO:0007829" key="5">
    <source>
        <dbReference type="PDB" id="3A3D"/>
    </source>
</evidence>